<name>PTGR2_PONAB</name>
<feature type="chain" id="PRO_0000218072" description="Prostaglandin reductase 2">
    <location>
        <begin position="1"/>
        <end position="351"/>
    </location>
</feature>
<feature type="binding site" evidence="1">
    <location>
        <begin position="99"/>
        <end position="100"/>
    </location>
    <ligand>
        <name>substrate</name>
    </ligand>
</feature>
<feature type="binding site" evidence="1">
    <location>
        <begin position="165"/>
        <end position="168"/>
    </location>
    <ligand>
        <name>NADP(+)</name>
        <dbReference type="ChEBI" id="CHEBI:58349"/>
    </ligand>
</feature>
<feature type="binding site" evidence="1">
    <location>
        <position position="192"/>
    </location>
    <ligand>
        <name>NADP(+)</name>
        <dbReference type="ChEBI" id="CHEBI:58349"/>
    </ligand>
</feature>
<feature type="binding site" evidence="1">
    <location>
        <position position="208"/>
    </location>
    <ligand>
        <name>NADP(+)</name>
        <dbReference type="ChEBI" id="CHEBI:58349"/>
    </ligand>
</feature>
<feature type="binding site" evidence="1">
    <location>
        <position position="231"/>
    </location>
    <ligand>
        <name>NADP(+)</name>
        <dbReference type="ChEBI" id="CHEBI:58349"/>
    </ligand>
</feature>
<feature type="binding site" evidence="1">
    <location>
        <begin position="253"/>
        <end position="259"/>
    </location>
    <ligand>
        <name>NADP(+)</name>
        <dbReference type="ChEBI" id="CHEBI:58349"/>
    </ligand>
</feature>
<feature type="binding site" evidence="1">
    <location>
        <begin position="287"/>
        <end position="289"/>
    </location>
    <ligand>
        <name>NADP(+)</name>
        <dbReference type="ChEBI" id="CHEBI:58349"/>
    </ligand>
</feature>
<feature type="binding site" evidence="1">
    <location>
        <begin position="288"/>
        <end position="290"/>
    </location>
    <ligand>
        <name>substrate</name>
    </ligand>
</feature>
<feature type="binding site" evidence="1">
    <location>
        <position position="337"/>
    </location>
    <ligand>
        <name>NADP(+)</name>
        <dbReference type="ChEBI" id="CHEBI:58349"/>
    </ligand>
</feature>
<sequence length="351" mass="38479">MIVQRVVLNSRPGKNGNPVAENFRMEEVYLPDNINEGQVQVRTLYLSVDPYMRCRMNEDTGTDYITPWQLSQVVDGGGIGIIEESKHTNLTKGDFVTSFYWPWQTKVILDGNSLEKVDPQLVDGHLSYFLGAIGMPGLTSLIGIQEKGHITAGSNKTMVVSGAAGACGSVAGQIGHLLGCSRVVGICGTHEKCVLLTSELGFDAAINYKKDNVAEQLRESCPAGVDVYFDNVGGNISDTVISQMNENSHIILCGQISQYNKDVPYPPPLSPAIEAIQKERNITRERFLVLNYRDKFEPGILQLSQWFKEGKLKIKETVINGLENMGAAFQSMMTGGNIGKQIVCISEEISL</sequence>
<reference key="1">
    <citation type="submission" date="2004-11" db="EMBL/GenBank/DDBJ databases">
        <authorList>
            <consortium name="The German cDNA consortium"/>
        </authorList>
    </citation>
    <scope>NUCLEOTIDE SEQUENCE [LARGE SCALE MRNA]</scope>
    <source>
        <tissue>Kidney</tissue>
    </source>
</reference>
<protein>
    <recommendedName>
        <fullName>Prostaglandin reductase 2</fullName>
        <shortName>PRG-2</shortName>
        <ecNumber>1.3.1.48</ecNumber>
    </recommendedName>
    <alternativeName>
        <fullName>15-oxoprostaglandin 13-reductase</fullName>
    </alternativeName>
</protein>
<dbReference type="EC" id="1.3.1.48"/>
<dbReference type="EMBL" id="CR859950">
    <property type="protein sequence ID" value="CAH92104.1"/>
    <property type="status" value="ALT_SEQ"/>
    <property type="molecule type" value="mRNA"/>
</dbReference>
<dbReference type="SMR" id="Q5R806"/>
<dbReference type="FunCoup" id="Q5R806">
    <property type="interactions" value="661"/>
</dbReference>
<dbReference type="STRING" id="9601.ENSPPYP00000006793"/>
<dbReference type="eggNOG" id="KOG1196">
    <property type="taxonomic scope" value="Eukaryota"/>
</dbReference>
<dbReference type="InParanoid" id="Q5R806"/>
<dbReference type="Proteomes" id="UP000001595">
    <property type="component" value="Unplaced"/>
</dbReference>
<dbReference type="GO" id="GO:0005737">
    <property type="term" value="C:cytoplasm"/>
    <property type="evidence" value="ECO:0007669"/>
    <property type="project" value="UniProtKB-SubCell"/>
</dbReference>
<dbReference type="GO" id="GO:0047522">
    <property type="term" value="F:15-oxoprostaglandin 13-oxidase [NAD(P)+] activity"/>
    <property type="evidence" value="ECO:0000250"/>
    <property type="project" value="UniProtKB"/>
</dbReference>
<dbReference type="GO" id="GO:0006693">
    <property type="term" value="P:prostaglandin metabolic process"/>
    <property type="evidence" value="ECO:0000250"/>
    <property type="project" value="UniProtKB"/>
</dbReference>
<dbReference type="CDD" id="cd08293">
    <property type="entry name" value="PTGR2"/>
    <property type="match status" value="1"/>
</dbReference>
<dbReference type="FunFam" id="3.40.50.720:FF:000121">
    <property type="entry name" value="Prostaglandin reductase 2"/>
    <property type="match status" value="1"/>
</dbReference>
<dbReference type="FunFam" id="3.90.180.10:FF:000019">
    <property type="entry name" value="Prostaglandin reductase 2"/>
    <property type="match status" value="1"/>
</dbReference>
<dbReference type="Gene3D" id="3.90.180.10">
    <property type="entry name" value="Medium-chain alcohol dehydrogenases, catalytic domain"/>
    <property type="match status" value="1"/>
</dbReference>
<dbReference type="Gene3D" id="3.40.50.720">
    <property type="entry name" value="NAD(P)-binding Rossmann-like Domain"/>
    <property type="match status" value="1"/>
</dbReference>
<dbReference type="InterPro" id="IPR013149">
    <property type="entry name" value="ADH-like_C"/>
</dbReference>
<dbReference type="InterPro" id="IPR041694">
    <property type="entry name" value="ADH_N_2"/>
</dbReference>
<dbReference type="InterPro" id="IPR011032">
    <property type="entry name" value="GroES-like_sf"/>
</dbReference>
<dbReference type="InterPro" id="IPR045010">
    <property type="entry name" value="MDR_fam"/>
</dbReference>
<dbReference type="InterPro" id="IPR036291">
    <property type="entry name" value="NAD(P)-bd_dom_sf"/>
</dbReference>
<dbReference type="InterPro" id="IPR037399">
    <property type="entry name" value="PTGR2"/>
</dbReference>
<dbReference type="PANTHER" id="PTHR43205">
    <property type="entry name" value="PROSTAGLANDIN REDUCTASE"/>
    <property type="match status" value="1"/>
</dbReference>
<dbReference type="PANTHER" id="PTHR43205:SF5">
    <property type="entry name" value="PROSTAGLANDIN REDUCTASE 2"/>
    <property type="match status" value="1"/>
</dbReference>
<dbReference type="Pfam" id="PF16884">
    <property type="entry name" value="ADH_N_2"/>
    <property type="match status" value="1"/>
</dbReference>
<dbReference type="Pfam" id="PF00107">
    <property type="entry name" value="ADH_zinc_N"/>
    <property type="match status" value="1"/>
</dbReference>
<dbReference type="SUPFAM" id="SSF50129">
    <property type="entry name" value="GroES-like"/>
    <property type="match status" value="2"/>
</dbReference>
<dbReference type="SUPFAM" id="SSF51735">
    <property type="entry name" value="NAD(P)-binding Rossmann-fold domains"/>
    <property type="match status" value="1"/>
</dbReference>
<evidence type="ECO:0000250" key="1"/>
<evidence type="ECO:0000250" key="2">
    <source>
        <dbReference type="UniProtKB" id="Q8VDQ1"/>
    </source>
</evidence>
<evidence type="ECO:0000305" key="3"/>
<gene>
    <name type="primary">PTGR2</name>
</gene>
<keyword id="KW-0963">Cytoplasm</keyword>
<keyword id="KW-0443">Lipid metabolism</keyword>
<keyword id="KW-0521">NADP</keyword>
<keyword id="KW-0560">Oxidoreductase</keyword>
<keyword id="KW-1185">Reference proteome</keyword>
<organism>
    <name type="scientific">Pongo abelii</name>
    <name type="common">Sumatran orangutan</name>
    <name type="synonym">Pongo pygmaeus abelii</name>
    <dbReference type="NCBI Taxonomy" id="9601"/>
    <lineage>
        <taxon>Eukaryota</taxon>
        <taxon>Metazoa</taxon>
        <taxon>Chordata</taxon>
        <taxon>Craniata</taxon>
        <taxon>Vertebrata</taxon>
        <taxon>Euteleostomi</taxon>
        <taxon>Mammalia</taxon>
        <taxon>Eutheria</taxon>
        <taxon>Euarchontoglires</taxon>
        <taxon>Primates</taxon>
        <taxon>Haplorrhini</taxon>
        <taxon>Catarrhini</taxon>
        <taxon>Hominidae</taxon>
        <taxon>Pongo</taxon>
    </lineage>
</organism>
<comment type="function">
    <text evidence="2">Functions as 15-oxo-prostaglandin 13-reductase and acts on 15-keto-PGE1, 15-keto-PGE2, 15-keto-PGE1-alpha and 15-keto-PGE2-alpha with highest activity towards 15-keto-PGE2. Overexpression represses transcriptional activity of PPARG and inhibits adipocyte differentiation.</text>
</comment>
<comment type="catalytic activity">
    <reaction evidence="2">
        <text>13,14-dihydro-15-oxo-prostaglandin E2 + NAD(+) = 15-oxoprostaglandin E2 + NADH + H(+)</text>
        <dbReference type="Rhea" id="RHEA:11916"/>
        <dbReference type="ChEBI" id="CHEBI:15378"/>
        <dbReference type="ChEBI" id="CHEBI:57400"/>
        <dbReference type="ChEBI" id="CHEBI:57402"/>
        <dbReference type="ChEBI" id="CHEBI:57540"/>
        <dbReference type="ChEBI" id="CHEBI:57945"/>
        <dbReference type="EC" id="1.3.1.48"/>
    </reaction>
    <physiologicalReaction direction="right-to-left" evidence="2">
        <dbReference type="Rhea" id="RHEA:11918"/>
    </physiologicalReaction>
</comment>
<comment type="catalytic activity">
    <reaction evidence="2">
        <text>13,14-dihydro-15-oxo-prostaglandin E2 + NADP(+) = 15-oxoprostaglandin E2 + NADPH + H(+)</text>
        <dbReference type="Rhea" id="RHEA:11912"/>
        <dbReference type="ChEBI" id="CHEBI:15378"/>
        <dbReference type="ChEBI" id="CHEBI:57400"/>
        <dbReference type="ChEBI" id="CHEBI:57402"/>
        <dbReference type="ChEBI" id="CHEBI:57783"/>
        <dbReference type="ChEBI" id="CHEBI:58349"/>
        <dbReference type="EC" id="1.3.1.48"/>
    </reaction>
    <physiologicalReaction direction="right-to-left" evidence="2">
        <dbReference type="Rhea" id="RHEA:11914"/>
    </physiologicalReaction>
</comment>
<comment type="catalytic activity">
    <reaction evidence="2">
        <text>13,14-dihydro-15-oxo-PGF2alpha + NADP(+) = 15-oxoprostaglandin F2alpha + NADPH + H(+)</text>
        <dbReference type="Rhea" id="RHEA:50588"/>
        <dbReference type="ChEBI" id="CHEBI:15378"/>
        <dbReference type="ChEBI" id="CHEBI:57783"/>
        <dbReference type="ChEBI" id="CHEBI:58349"/>
        <dbReference type="ChEBI" id="CHEBI:133374"/>
        <dbReference type="ChEBI" id="CHEBI:133409"/>
    </reaction>
    <physiologicalReaction direction="right-to-left" evidence="2">
        <dbReference type="Rhea" id="RHEA:50590"/>
    </physiologicalReaction>
</comment>
<comment type="catalytic activity">
    <reaction evidence="2">
        <text>13,14-dihydro-15-oxo-prostaglandin E1 + NADP(+) = 15-oxoprostaglandin E1 + NADPH + H(+)</text>
        <dbReference type="Rhea" id="RHEA:50584"/>
        <dbReference type="ChEBI" id="CHEBI:15378"/>
        <dbReference type="ChEBI" id="CHEBI:57401"/>
        <dbReference type="ChEBI" id="CHEBI:57783"/>
        <dbReference type="ChEBI" id="CHEBI:58349"/>
        <dbReference type="ChEBI" id="CHEBI:133408"/>
    </reaction>
    <physiologicalReaction direction="right-to-left" evidence="2">
        <dbReference type="Rhea" id="RHEA:50586"/>
    </physiologicalReaction>
</comment>
<comment type="catalytic activity">
    <reaction evidence="2">
        <text>13,14-dihydro-15-oxo-prostaglandin F1alpha + NADP(+) = 15-oxoprostaglandin F1alpha + NADPH + H(+)</text>
        <dbReference type="Rhea" id="RHEA:50592"/>
        <dbReference type="ChEBI" id="CHEBI:15378"/>
        <dbReference type="ChEBI" id="CHEBI:57783"/>
        <dbReference type="ChEBI" id="CHEBI:58349"/>
        <dbReference type="ChEBI" id="CHEBI:79072"/>
        <dbReference type="ChEBI" id="CHEBI:133411"/>
    </reaction>
    <physiologicalReaction direction="right-to-left" evidence="2">
        <dbReference type="Rhea" id="RHEA:50594"/>
    </physiologicalReaction>
</comment>
<comment type="subunit">
    <text evidence="1">Monomer.</text>
</comment>
<comment type="subcellular location">
    <subcellularLocation>
        <location evidence="1">Cytoplasm</location>
    </subcellularLocation>
</comment>
<comment type="similarity">
    <text evidence="3">Belongs to the NADP-dependent oxidoreductase L4BD family.</text>
</comment>
<comment type="sequence caution" evidence="3">
    <conflict type="erroneous termination">
        <sequence resource="EMBL-CDS" id="CAH92104"/>
    </conflict>
    <text>Extended C-terminus.</text>
</comment>
<accession>Q5R806</accession>
<proteinExistence type="evidence at transcript level"/>